<feature type="signal peptide" evidence="2">
    <location>
        <begin position="1"/>
        <end position="24"/>
    </location>
</feature>
<feature type="chain" id="PRO_0000032198" description="Basic 7S globulin">
    <location>
        <begin position="25"/>
        <end position="427"/>
    </location>
</feature>
<feature type="chain" id="PRO_0000032199" description="Basic 7S globulin high kDa subunit">
    <location>
        <begin position="25"/>
        <end position="275"/>
    </location>
</feature>
<feature type="chain" id="PRO_0000032200" description="Basic 7S globulin low kDa subunit">
    <location>
        <begin position="276"/>
        <end position="427"/>
    </location>
</feature>
<feature type="domain" description="Peptidase A1" evidence="1">
    <location>
        <begin position="47"/>
        <end position="407"/>
    </location>
</feature>
<feature type="sequence conflict" description="In Ref. 3; AAB03390." evidence="3" ref="3">
    <original>W</original>
    <variation>S</variation>
    <location>
        <position position="48"/>
    </location>
</feature>
<feature type="sequence conflict" description="In Ref. 1; CAA34489." evidence="3" ref="1">
    <original>N</original>
    <variation>T</variation>
    <location>
        <position position="264"/>
    </location>
</feature>
<feature type="sequence conflict" description="In Ref. 1; CAA34489." evidence="3" ref="1">
    <original>F</original>
    <variation>C</variation>
    <location>
        <position position="305"/>
    </location>
</feature>
<feature type="sequence conflict" description="In Ref. 1; CAA34489." evidence="3" ref="1">
    <original>F</original>
    <variation>C</variation>
    <location>
        <position position="309"/>
    </location>
</feature>
<feature type="strand" evidence="4">
    <location>
        <begin position="34"/>
        <end position="40"/>
    </location>
</feature>
<feature type="turn" evidence="4">
    <location>
        <begin position="42"/>
        <end position="44"/>
    </location>
</feature>
<feature type="strand" evidence="4">
    <location>
        <begin position="47"/>
        <end position="53"/>
    </location>
</feature>
<feature type="turn" evidence="4">
    <location>
        <begin position="54"/>
        <end position="57"/>
    </location>
</feature>
<feature type="strand" evidence="4">
    <location>
        <begin position="58"/>
        <end position="65"/>
    </location>
</feature>
<feature type="strand" evidence="4">
    <location>
        <begin position="69"/>
        <end position="74"/>
    </location>
</feature>
<feature type="helix" evidence="4">
    <location>
        <begin position="92"/>
        <end position="96"/>
    </location>
</feature>
<feature type="strand" evidence="4">
    <location>
        <begin position="102"/>
        <end position="104"/>
    </location>
</feature>
<feature type="strand" evidence="4">
    <location>
        <begin position="106"/>
        <end position="108"/>
    </location>
</feature>
<feature type="strand" evidence="4">
    <location>
        <begin position="115"/>
        <end position="124"/>
    </location>
</feature>
<feature type="turn" evidence="4">
    <location>
        <begin position="125"/>
        <end position="128"/>
    </location>
</feature>
<feature type="strand" evidence="4">
    <location>
        <begin position="129"/>
        <end position="144"/>
    </location>
</feature>
<feature type="strand" evidence="4">
    <location>
        <begin position="155"/>
        <end position="166"/>
    </location>
</feature>
<feature type="helix" evidence="4">
    <location>
        <begin position="168"/>
        <end position="171"/>
    </location>
</feature>
<feature type="strand" evidence="4">
    <location>
        <begin position="172"/>
        <end position="176"/>
    </location>
</feature>
<feature type="strand" evidence="4">
    <location>
        <begin position="181"/>
        <end position="184"/>
    </location>
</feature>
<feature type="strand" evidence="4">
    <location>
        <begin position="186"/>
        <end position="188"/>
    </location>
</feature>
<feature type="helix" evidence="4">
    <location>
        <begin position="192"/>
        <end position="200"/>
    </location>
</feature>
<feature type="strand" evidence="4">
    <location>
        <begin position="204"/>
        <end position="209"/>
    </location>
</feature>
<feature type="strand" evidence="4">
    <location>
        <begin position="218"/>
        <end position="223"/>
    </location>
</feature>
<feature type="helix" evidence="4">
    <location>
        <begin position="225"/>
        <end position="228"/>
    </location>
</feature>
<feature type="turn" evidence="4">
    <location>
        <begin position="237"/>
        <end position="240"/>
    </location>
</feature>
<feature type="strand" evidence="4">
    <location>
        <begin position="241"/>
        <end position="245"/>
    </location>
</feature>
<feature type="strand" evidence="4">
    <location>
        <begin position="254"/>
        <end position="256"/>
    </location>
</feature>
<feature type="strand" evidence="4">
    <location>
        <begin position="258"/>
        <end position="263"/>
    </location>
</feature>
<feature type="strand" evidence="4">
    <location>
        <begin position="266"/>
        <end position="269"/>
    </location>
</feature>
<feature type="strand" evidence="4">
    <location>
        <begin position="286"/>
        <end position="288"/>
    </location>
</feature>
<feature type="strand" evidence="4">
    <location>
        <begin position="293"/>
        <end position="297"/>
    </location>
</feature>
<feature type="helix" evidence="4">
    <location>
        <begin position="299"/>
        <end position="311"/>
    </location>
</feature>
<feature type="helix" evidence="4">
    <location>
        <begin position="315"/>
        <end position="317"/>
    </location>
</feature>
<feature type="helix" evidence="4">
    <location>
        <begin position="331"/>
        <end position="333"/>
    </location>
</feature>
<feature type="strand" evidence="4">
    <location>
        <begin position="340"/>
        <end position="346"/>
    </location>
</feature>
<feature type="strand" evidence="4">
    <location>
        <begin position="351"/>
        <end position="354"/>
    </location>
</feature>
<feature type="helix" evidence="4">
    <location>
        <begin position="356"/>
        <end position="359"/>
    </location>
</feature>
<feature type="strand" evidence="4">
    <location>
        <begin position="360"/>
        <end position="362"/>
    </location>
</feature>
<feature type="strand" evidence="4">
    <location>
        <begin position="364"/>
        <end position="366"/>
    </location>
</feature>
<feature type="strand" evidence="4">
    <location>
        <begin position="368"/>
        <end position="370"/>
    </location>
</feature>
<feature type="strand" evidence="4">
    <location>
        <begin position="372"/>
        <end position="374"/>
    </location>
</feature>
<feature type="strand" evidence="4">
    <location>
        <begin position="380"/>
        <end position="385"/>
    </location>
</feature>
<feature type="helix" evidence="4">
    <location>
        <begin position="387"/>
        <end position="390"/>
    </location>
</feature>
<feature type="strand" evidence="4">
    <location>
        <begin position="395"/>
        <end position="398"/>
    </location>
</feature>
<feature type="turn" evidence="4">
    <location>
        <begin position="399"/>
        <end position="402"/>
    </location>
</feature>
<feature type="strand" evidence="4">
    <location>
        <begin position="403"/>
        <end position="409"/>
    </location>
</feature>
<feature type="helix" evidence="4">
    <location>
        <begin position="411"/>
        <end position="414"/>
    </location>
</feature>
<feature type="helix" evidence="4">
    <location>
        <begin position="418"/>
        <end position="420"/>
    </location>
</feature>
<feature type="turn" evidence="4">
    <location>
        <begin position="424"/>
        <end position="426"/>
    </location>
</feature>
<protein>
    <recommendedName>
        <fullName>Basic 7S globulin</fullName>
    </recommendedName>
    <alternativeName>
        <fullName>SBg7S</fullName>
        <shortName>Bg</shortName>
    </alternativeName>
    <component>
        <recommendedName>
            <fullName>Basic 7S globulin high kDa subunit</fullName>
        </recommendedName>
    </component>
    <component>
        <recommendedName>
            <fullName>Basic 7S globulin low kDa subunit</fullName>
        </recommendedName>
    </component>
</protein>
<name>7SB1_SOYBN</name>
<gene>
    <name type="primary">BG</name>
    <name type="synonym">G7S</name>
</gene>
<comment type="function">
    <text>Seed storage protein. Has a protein kinase activity. Binds leginsulin.</text>
</comment>
<comment type="subunit">
    <text>The mature protein consists of high- and low-kDa subunits linked by disulfide bonds.</text>
</comment>
<comment type="interaction">
    <interactant intactId="EBI-8621895">
        <id>P13917</id>
    </interactant>
    <interactant intactId="EBI-8621895">
        <id>P13917</id>
        <label>BG</label>
    </interactant>
    <organismsDiffer>false</organismsDiffer>
    <experiments>5</experiments>
</comment>
<comment type="similarity">
    <text evidence="1">Belongs to the peptidase A1 family.</text>
</comment>
<keyword id="KW-0002">3D-structure</keyword>
<keyword id="KW-0903">Direct protein sequencing</keyword>
<keyword id="KW-1015">Disulfide bond</keyword>
<keyword id="KW-1185">Reference proteome</keyword>
<keyword id="KW-0708">Seed storage protein</keyword>
<keyword id="KW-0732">Signal</keyword>
<keyword id="KW-0758">Storage protein</keyword>
<reference key="1">
    <citation type="journal article" date="1989" name="Nucleic Acids Res.">
        <title>Sequence of a cDNA encoding soybean basic 7S globulin.</title>
        <authorList>
            <person name="Kagawa H."/>
            <person name="Hirano H."/>
        </authorList>
    </citation>
    <scope>NUCLEOTIDE SEQUENCE [MRNA]</scope>
    <scope>PARTIAL PROTEIN SEQUENCE</scope>
    <source>
        <strain>cv. Miyagishirome</strain>
        <tissue>Seed</tissue>
    </source>
</reference>
<reference key="2">
    <citation type="journal article" date="1994" name="Plant Physiol.">
        <title>Nucleotide sequence of the basic 7S globulin gene from soybean.</title>
        <authorList>
            <person name="Watanabe Y."/>
            <person name="Hirano H."/>
        </authorList>
    </citation>
    <scope>NUCLEOTIDE SEQUENCE [GENOMIC DNA]</scope>
    <source>
        <strain>cv. Miyagishirome</strain>
        <tissue>Etiolated leaf</tissue>
    </source>
</reference>
<reference key="3">
    <citation type="submission" date="1996-05" db="EMBL/GenBank/DDBJ databases">
        <authorList>
            <person name="Shu T.F."/>
            <person name="Hsieh K.L."/>
            <person name="Hsing Y.I."/>
            <person name="Chen Z.Y."/>
            <person name="Chow T.Y."/>
        </authorList>
    </citation>
    <scope>NUCLEOTIDE SEQUENCE</scope>
    <source>
        <strain>cv. Shi-shi</strain>
        <tissue>Cotyledon</tissue>
    </source>
</reference>
<reference key="4">
    <citation type="journal article" date="1990" name="Electrophoresis">
        <title>Microsequencing of proteins electrotransferred onto immobilizing matrices from polyacrylamide gel electrophoresis: application to an insoluble protein.</title>
        <authorList>
            <person name="Hirano H."/>
            <person name="Watanabe T."/>
        </authorList>
    </citation>
    <scope>PROTEIN SEQUENCE OF 25-57; 135-150; 276-311 AND 383-417</scope>
</reference>
<reference key="5">
    <citation type="journal article" date="1987" name="FEBS Lett.">
        <title>Soybean basic 7S globulin represents a protein widely distributed in legume species.</title>
        <authorList>
            <person name="Kagawa H."/>
            <person name="Yamauchi F."/>
            <person name="Hirano H."/>
        </authorList>
    </citation>
    <scope>PARTIAL PROTEIN SEQUENCE</scope>
</reference>
<sequence>MASILHYFLALSLSCSFLFFLSDSVTPTKPINLVVLPVQNDGSTGLHWANLQKRTPLMQVPVLVDLNGNHLWVNCEQQYSSKTYQAPFCHSTQCSRANTHQCLSCPAASRPGCHKNTCGLMSTNPITQQTGLGELGEDVLAIHATQGSTQQLGPLVTVPQFLFSCAPSFLVQKGLPRNTQGVAGLGHAPISLPNQLASHFGLQRQFTTCLSRYPTSKGAIIFGDAPNNMRQFQNQDIFHDLAFTPLTITLQGEYNVRVNSIRINQHSVFPLNKISSTIVGSTSGGTMISTSTPHMVLQQSVYQAFTQVFAQQLPKQAQVKSVAPFGLCFNSNKINAYPSVDLVMDKPNGPVWRISGEDLMVQAQPGVTCLGVMNGGMQPRAEITLGARQLEENLVVFDLARSRVGFSTSSLHSHGVKCADLFNFANA</sequence>
<accession>P13917</accession>
<accession>Q39901</accession>
<accession>Q43464</accession>
<organism>
    <name type="scientific">Glycine max</name>
    <name type="common">Soybean</name>
    <name type="synonym">Glycine hispida</name>
    <dbReference type="NCBI Taxonomy" id="3847"/>
    <lineage>
        <taxon>Eukaryota</taxon>
        <taxon>Viridiplantae</taxon>
        <taxon>Streptophyta</taxon>
        <taxon>Embryophyta</taxon>
        <taxon>Tracheophyta</taxon>
        <taxon>Spermatophyta</taxon>
        <taxon>Magnoliopsida</taxon>
        <taxon>eudicotyledons</taxon>
        <taxon>Gunneridae</taxon>
        <taxon>Pentapetalae</taxon>
        <taxon>rosids</taxon>
        <taxon>fabids</taxon>
        <taxon>Fabales</taxon>
        <taxon>Fabaceae</taxon>
        <taxon>Papilionoideae</taxon>
        <taxon>50 kb inversion clade</taxon>
        <taxon>NPAAA clade</taxon>
        <taxon>indigoferoid/millettioid clade</taxon>
        <taxon>Phaseoleae</taxon>
        <taxon>Glycine</taxon>
        <taxon>Glycine subgen. Soja</taxon>
    </lineage>
</organism>
<proteinExistence type="evidence at protein level"/>
<evidence type="ECO:0000255" key="1">
    <source>
        <dbReference type="PROSITE-ProRule" id="PRU01103"/>
    </source>
</evidence>
<evidence type="ECO:0000269" key="2">
    <source>
    </source>
</evidence>
<evidence type="ECO:0000305" key="3"/>
<evidence type="ECO:0007829" key="4">
    <source>
        <dbReference type="PDB" id="3AUP"/>
    </source>
</evidence>
<dbReference type="EMBL" id="X16469">
    <property type="protein sequence ID" value="CAA34489.1"/>
    <property type="molecule type" value="mRNA"/>
</dbReference>
<dbReference type="EMBL" id="U59425">
    <property type="protein sequence ID" value="AAB03390.1"/>
    <property type="molecule type" value="mRNA"/>
</dbReference>
<dbReference type="EMBL" id="D16107">
    <property type="protein sequence ID" value="BAA03681.1"/>
    <property type="molecule type" value="Genomic_DNA"/>
</dbReference>
<dbReference type="PIR" id="S06750">
    <property type="entry name" value="S06750"/>
</dbReference>
<dbReference type="RefSeq" id="XP_003521716.1">
    <property type="nucleotide sequence ID" value="XM_003521668.3"/>
</dbReference>
<dbReference type="PDB" id="3AUP">
    <property type="method" value="X-ray"/>
    <property type="resolution" value="1.91 A"/>
    <property type="chains" value="A/B/C/D=25-427"/>
</dbReference>
<dbReference type="PDBsum" id="3AUP"/>
<dbReference type="SMR" id="P13917"/>
<dbReference type="MINT" id="P13917"/>
<dbReference type="STRING" id="3847.P13917"/>
<dbReference type="PaxDb" id="3847-GLYMA03G39940.1"/>
<dbReference type="EnsemblPlants" id="KRH68584">
    <property type="protein sequence ID" value="KRH68584"/>
    <property type="gene ID" value="GLYMA_03G239700"/>
</dbReference>
<dbReference type="Gramene" id="KRH68584">
    <property type="protein sequence ID" value="KRH68584"/>
    <property type="gene ID" value="GLYMA_03G239700"/>
</dbReference>
<dbReference type="eggNOG" id="KOG1339">
    <property type="taxonomic scope" value="Eukaryota"/>
</dbReference>
<dbReference type="HOGENOM" id="CLU_032185_0_0_1"/>
<dbReference type="InParanoid" id="P13917"/>
<dbReference type="OMA" id="CSIANTH"/>
<dbReference type="OrthoDB" id="1258937at2759"/>
<dbReference type="EvolutionaryTrace" id="P13917"/>
<dbReference type="Proteomes" id="UP000008827">
    <property type="component" value="Chromosome 3"/>
</dbReference>
<dbReference type="GO" id="GO:0004190">
    <property type="term" value="F:aspartic-type endopeptidase activity"/>
    <property type="evidence" value="ECO:0007669"/>
    <property type="project" value="InterPro"/>
</dbReference>
<dbReference type="GO" id="GO:0042802">
    <property type="term" value="F:identical protein binding"/>
    <property type="evidence" value="ECO:0000353"/>
    <property type="project" value="IntAct"/>
</dbReference>
<dbReference type="GO" id="GO:0045735">
    <property type="term" value="F:nutrient reservoir activity"/>
    <property type="evidence" value="ECO:0007669"/>
    <property type="project" value="UniProtKB-KW"/>
</dbReference>
<dbReference type="GO" id="GO:0006508">
    <property type="term" value="P:proteolysis"/>
    <property type="evidence" value="ECO:0007669"/>
    <property type="project" value="InterPro"/>
</dbReference>
<dbReference type="CDD" id="cd05489">
    <property type="entry name" value="xylanase_inhibitor_I_like"/>
    <property type="match status" value="1"/>
</dbReference>
<dbReference type="FunFam" id="2.40.70.10:FF:000045">
    <property type="entry name" value="Basic 7S globulin"/>
    <property type="match status" value="1"/>
</dbReference>
<dbReference type="FunFam" id="2.40.70.10:FF:000126">
    <property type="entry name" value="Gamma conglutin 1"/>
    <property type="match status" value="1"/>
</dbReference>
<dbReference type="Gene3D" id="2.40.70.10">
    <property type="entry name" value="Acid Proteases"/>
    <property type="match status" value="2"/>
</dbReference>
<dbReference type="InterPro" id="IPR001461">
    <property type="entry name" value="Aspartic_peptidase_A1"/>
</dbReference>
<dbReference type="InterPro" id="IPR033121">
    <property type="entry name" value="PEPTIDASE_A1"/>
</dbReference>
<dbReference type="InterPro" id="IPR021109">
    <property type="entry name" value="Peptidase_aspartic_dom_sf"/>
</dbReference>
<dbReference type="InterPro" id="IPR032799">
    <property type="entry name" value="TAXi_C"/>
</dbReference>
<dbReference type="InterPro" id="IPR032861">
    <property type="entry name" value="TAXi_N"/>
</dbReference>
<dbReference type="InterPro" id="IPR033868">
    <property type="entry name" value="Xylanase_inhibitor_I-like"/>
</dbReference>
<dbReference type="PANTHER" id="PTHR47965">
    <property type="entry name" value="ASPARTYL PROTEASE-RELATED"/>
    <property type="match status" value="1"/>
</dbReference>
<dbReference type="PANTHER" id="PTHR47965:SF28">
    <property type="entry name" value="BASIC 7S GLOBULIN"/>
    <property type="match status" value="1"/>
</dbReference>
<dbReference type="Pfam" id="PF14541">
    <property type="entry name" value="TAXi_C"/>
    <property type="match status" value="1"/>
</dbReference>
<dbReference type="Pfam" id="PF14543">
    <property type="entry name" value="TAXi_N"/>
    <property type="match status" value="1"/>
</dbReference>
<dbReference type="SUPFAM" id="SSF50630">
    <property type="entry name" value="Acid proteases"/>
    <property type="match status" value="1"/>
</dbReference>
<dbReference type="PROSITE" id="PS51767">
    <property type="entry name" value="PEPTIDASE_A1"/>
    <property type="match status" value="1"/>
</dbReference>